<feature type="chain" id="PRO_1000016531" description="Protein NrdI">
    <location>
        <begin position="1"/>
        <end position="162"/>
    </location>
</feature>
<name>NRDI_STRPC</name>
<protein>
    <recommendedName>
        <fullName evidence="1">Protein NrdI</fullName>
    </recommendedName>
</protein>
<dbReference type="EMBL" id="CP000259">
    <property type="protein sequence ID" value="ABF31539.1"/>
    <property type="molecule type" value="Genomic_DNA"/>
</dbReference>
<dbReference type="RefSeq" id="WP_002990870.1">
    <property type="nucleotide sequence ID" value="NC_008021.1"/>
</dbReference>
<dbReference type="SMR" id="Q1JN60"/>
<dbReference type="GeneID" id="69901324"/>
<dbReference type="KEGG" id="spk:MGAS9429_Spy0351"/>
<dbReference type="HOGENOM" id="CLU_114845_0_0_9"/>
<dbReference type="Proteomes" id="UP000002433">
    <property type="component" value="Chromosome"/>
</dbReference>
<dbReference type="GO" id="GO:0010181">
    <property type="term" value="F:FMN binding"/>
    <property type="evidence" value="ECO:0007669"/>
    <property type="project" value="InterPro"/>
</dbReference>
<dbReference type="GO" id="GO:0036211">
    <property type="term" value="P:protein modification process"/>
    <property type="evidence" value="ECO:0007669"/>
    <property type="project" value="InterPro"/>
</dbReference>
<dbReference type="Gene3D" id="3.40.50.360">
    <property type="match status" value="1"/>
</dbReference>
<dbReference type="HAMAP" id="MF_00128">
    <property type="entry name" value="NrdI"/>
    <property type="match status" value="1"/>
</dbReference>
<dbReference type="InterPro" id="IPR029039">
    <property type="entry name" value="Flavoprotein-like_sf"/>
</dbReference>
<dbReference type="InterPro" id="IPR020852">
    <property type="entry name" value="RNR_Ib_NrdI_bac"/>
</dbReference>
<dbReference type="InterPro" id="IPR004465">
    <property type="entry name" value="RNR_NrdI"/>
</dbReference>
<dbReference type="NCBIfam" id="TIGR00333">
    <property type="entry name" value="nrdI"/>
    <property type="match status" value="1"/>
</dbReference>
<dbReference type="PANTHER" id="PTHR37297">
    <property type="entry name" value="PROTEIN NRDI"/>
    <property type="match status" value="1"/>
</dbReference>
<dbReference type="PANTHER" id="PTHR37297:SF1">
    <property type="entry name" value="PROTEIN NRDI"/>
    <property type="match status" value="1"/>
</dbReference>
<dbReference type="Pfam" id="PF07972">
    <property type="entry name" value="Flavodoxin_NdrI"/>
    <property type="match status" value="1"/>
</dbReference>
<dbReference type="PIRSF" id="PIRSF005087">
    <property type="entry name" value="NrdI"/>
    <property type="match status" value="1"/>
</dbReference>
<dbReference type="SUPFAM" id="SSF52218">
    <property type="entry name" value="Flavoproteins"/>
    <property type="match status" value="1"/>
</dbReference>
<gene>
    <name evidence="1" type="primary">nrdI</name>
    <name type="ordered locus">MGAS9429_Spy0351</name>
</gene>
<organism>
    <name type="scientific">Streptococcus pyogenes serotype M12 (strain MGAS9429)</name>
    <dbReference type="NCBI Taxonomy" id="370551"/>
    <lineage>
        <taxon>Bacteria</taxon>
        <taxon>Bacillati</taxon>
        <taxon>Bacillota</taxon>
        <taxon>Bacilli</taxon>
        <taxon>Lactobacillales</taxon>
        <taxon>Streptococcaceae</taxon>
        <taxon>Streptococcus</taxon>
    </lineage>
</organism>
<reference key="1">
    <citation type="journal article" date="2006" name="Proc. Natl. Acad. Sci. U.S.A.">
        <title>Molecular genetic anatomy of inter- and intraserotype variation in the human bacterial pathogen group A Streptococcus.</title>
        <authorList>
            <person name="Beres S.B."/>
            <person name="Richter E.W."/>
            <person name="Nagiec M.J."/>
            <person name="Sumby P."/>
            <person name="Porcella S.F."/>
            <person name="DeLeo F.R."/>
            <person name="Musser J.M."/>
        </authorList>
    </citation>
    <scope>NUCLEOTIDE SEQUENCE [LARGE SCALE GENOMIC DNA]</scope>
    <source>
        <strain>MGAS9429</strain>
    </source>
</reference>
<accession>Q1JN60</accession>
<sequence>MAELIIVYFSSKSNNTHRFVQKLGLPAQRIPVDNRPLEVSTHYLLIVPTYAAGGSDAKGAVPKQVIRFLNNPNNRKHCKGVISSGNTNFGDTFALAGPIISQKLQVPLLHQFELLGTATDVKKVQAIFARLKHHTHDKQKQTNNLITERTHPCHKPMRHTSH</sequence>
<proteinExistence type="inferred from homology"/>
<comment type="function">
    <text evidence="1">Probably involved in ribonucleotide reductase function.</text>
</comment>
<comment type="similarity">
    <text evidence="1">Belongs to the NrdI family.</text>
</comment>
<evidence type="ECO:0000255" key="1">
    <source>
        <dbReference type="HAMAP-Rule" id="MF_00128"/>
    </source>
</evidence>